<reference key="1">
    <citation type="journal article" date="2002" name="Science">
        <title>50 million years of genomic stasis in endosymbiotic bacteria.</title>
        <authorList>
            <person name="Tamas I."/>
            <person name="Klasson L."/>
            <person name="Canbaeck B."/>
            <person name="Naeslund A.K."/>
            <person name="Eriksson A.-S."/>
            <person name="Wernegreen J.J."/>
            <person name="Sandstroem J.P."/>
            <person name="Moran N.A."/>
            <person name="Andersson S.G.E."/>
        </authorList>
    </citation>
    <scope>NUCLEOTIDE SEQUENCE [LARGE SCALE GENOMIC DNA]</scope>
    <source>
        <strain>Sg</strain>
    </source>
</reference>
<sequence length="128" mass="14585">MNVIVNTENAPKPIGPYSQAIKNENFLIISGQIPIDVKSGKIPNNISEQTYIVLKNIKSIIIASKYTIQDIIKITVFTTNLEKIHIINEIYEKFFIDNKSSFPTRSCIEVQKLPKNVKIEMEAMAFKK</sequence>
<protein>
    <recommendedName>
        <fullName>RutC family protein BUsg_359</fullName>
    </recommendedName>
</protein>
<evidence type="ECO:0000305" key="1"/>
<dbReference type="EMBL" id="AE013218">
    <property type="protein sequence ID" value="AAM67912.1"/>
    <property type="molecule type" value="Genomic_DNA"/>
</dbReference>
<dbReference type="RefSeq" id="WP_011053879.1">
    <property type="nucleotide sequence ID" value="NC_004061.1"/>
</dbReference>
<dbReference type="SMR" id="Q8K9H7"/>
<dbReference type="STRING" id="198804.BUsg_359"/>
<dbReference type="GeneID" id="93003829"/>
<dbReference type="KEGG" id="bas:BUsg_359"/>
<dbReference type="eggNOG" id="COG0251">
    <property type="taxonomic scope" value="Bacteria"/>
</dbReference>
<dbReference type="HOGENOM" id="CLU_100715_7_3_6"/>
<dbReference type="Proteomes" id="UP000000416">
    <property type="component" value="Chromosome"/>
</dbReference>
<dbReference type="GO" id="GO:0005829">
    <property type="term" value="C:cytosol"/>
    <property type="evidence" value="ECO:0007669"/>
    <property type="project" value="TreeGrafter"/>
</dbReference>
<dbReference type="GO" id="GO:0019239">
    <property type="term" value="F:deaminase activity"/>
    <property type="evidence" value="ECO:0007669"/>
    <property type="project" value="TreeGrafter"/>
</dbReference>
<dbReference type="CDD" id="cd00448">
    <property type="entry name" value="YjgF_YER057c_UK114_family"/>
    <property type="match status" value="1"/>
</dbReference>
<dbReference type="FunFam" id="3.30.1330.40:FF:000001">
    <property type="entry name" value="L-PSP family endoribonuclease"/>
    <property type="match status" value="1"/>
</dbReference>
<dbReference type="Gene3D" id="3.30.1330.40">
    <property type="entry name" value="RutC-like"/>
    <property type="match status" value="1"/>
</dbReference>
<dbReference type="InterPro" id="IPR006056">
    <property type="entry name" value="RidA"/>
</dbReference>
<dbReference type="InterPro" id="IPR035959">
    <property type="entry name" value="RutC-like_sf"/>
</dbReference>
<dbReference type="InterPro" id="IPR006175">
    <property type="entry name" value="YjgF/YER057c/UK114"/>
</dbReference>
<dbReference type="NCBIfam" id="TIGR00004">
    <property type="entry name" value="Rid family detoxifying hydrolase"/>
    <property type="match status" value="1"/>
</dbReference>
<dbReference type="PANTHER" id="PTHR11803">
    <property type="entry name" value="2-IMINOBUTANOATE/2-IMINOPROPANOATE DEAMINASE RIDA"/>
    <property type="match status" value="1"/>
</dbReference>
<dbReference type="PANTHER" id="PTHR11803:SF39">
    <property type="entry name" value="2-IMINOBUTANOATE_2-IMINOPROPANOATE DEAMINASE"/>
    <property type="match status" value="1"/>
</dbReference>
<dbReference type="Pfam" id="PF01042">
    <property type="entry name" value="Ribonuc_L-PSP"/>
    <property type="match status" value="1"/>
</dbReference>
<dbReference type="SUPFAM" id="SSF55298">
    <property type="entry name" value="YjgF-like"/>
    <property type="match status" value="1"/>
</dbReference>
<comment type="similarity">
    <text evidence="1">Belongs to the RutC family.</text>
</comment>
<organism>
    <name type="scientific">Buchnera aphidicola subsp. Schizaphis graminum (strain Sg)</name>
    <dbReference type="NCBI Taxonomy" id="198804"/>
    <lineage>
        <taxon>Bacteria</taxon>
        <taxon>Pseudomonadati</taxon>
        <taxon>Pseudomonadota</taxon>
        <taxon>Gammaproteobacteria</taxon>
        <taxon>Enterobacterales</taxon>
        <taxon>Erwiniaceae</taxon>
        <taxon>Buchnera</taxon>
    </lineage>
</organism>
<name>Y359_BUCAP</name>
<feature type="chain" id="PRO_0000170332" description="RutC family protein BUsg_359">
    <location>
        <begin position="1"/>
        <end position="128"/>
    </location>
</feature>
<proteinExistence type="inferred from homology"/>
<accession>Q8K9H7</accession>
<gene>
    <name type="ordered locus">BUsg_359</name>
</gene>